<reference key="1">
    <citation type="submission" date="2008-02" db="EMBL/GenBank/DDBJ databases">
        <title>Complete sequence of Haemophilus somnus 2336.</title>
        <authorList>
            <consortium name="US DOE Joint Genome Institute"/>
            <person name="Siddaramappa S."/>
            <person name="Duncan A.J."/>
            <person name="Challacombe J.F."/>
            <person name="Rainey D."/>
            <person name="Gillaspy A.F."/>
            <person name="Carson M."/>
            <person name="Gipson J."/>
            <person name="Gipson M."/>
            <person name="Bruce D."/>
            <person name="Detter J.C."/>
            <person name="Han C.S."/>
            <person name="Land M."/>
            <person name="Tapia R."/>
            <person name="Thompson L.S."/>
            <person name="Orvis J."/>
            <person name="Zaitshik J."/>
            <person name="Barnes G."/>
            <person name="Brettin T.S."/>
            <person name="Dyer D.W."/>
            <person name="Inzana T.J."/>
        </authorList>
    </citation>
    <scope>NUCLEOTIDE SEQUENCE [LARGE SCALE GENOMIC DNA]</scope>
    <source>
        <strain>2336</strain>
    </source>
</reference>
<feature type="chain" id="PRO_1000136890" description="UPF0283 membrane protein HSM_0945">
    <location>
        <begin position="1"/>
        <end position="357"/>
    </location>
</feature>
<feature type="transmembrane region" description="Helical" evidence="1">
    <location>
        <begin position="67"/>
        <end position="87"/>
    </location>
</feature>
<feature type="transmembrane region" description="Helical" evidence="1">
    <location>
        <begin position="96"/>
        <end position="116"/>
    </location>
</feature>
<feature type="transmembrane region" description="Helical" evidence="1">
    <location>
        <begin position="213"/>
        <end position="233"/>
    </location>
</feature>
<gene>
    <name type="ordered locus">HSM_0945</name>
</gene>
<accession>B0UT28</accession>
<comment type="subcellular location">
    <subcellularLocation>
        <location evidence="1">Cell inner membrane</location>
        <topology evidence="1">Multi-pass membrane protein</topology>
    </subcellularLocation>
</comment>
<comment type="similarity">
    <text evidence="1">Belongs to the UPF0283 family.</text>
</comment>
<dbReference type="EMBL" id="CP000947">
    <property type="protein sequence ID" value="ACA32629.1"/>
    <property type="molecule type" value="Genomic_DNA"/>
</dbReference>
<dbReference type="RefSeq" id="WP_012341750.1">
    <property type="nucleotide sequence ID" value="NC_010519.1"/>
</dbReference>
<dbReference type="SMR" id="B0UT28"/>
<dbReference type="STRING" id="228400.HSM_0945"/>
<dbReference type="GeneID" id="31487244"/>
<dbReference type="KEGG" id="hsm:HSM_0945"/>
<dbReference type="HOGENOM" id="CLU_057693_2_0_6"/>
<dbReference type="GO" id="GO:0005886">
    <property type="term" value="C:plasma membrane"/>
    <property type="evidence" value="ECO:0007669"/>
    <property type="project" value="UniProtKB-SubCell"/>
</dbReference>
<dbReference type="HAMAP" id="MF_01085">
    <property type="entry name" value="UPF0283"/>
    <property type="match status" value="1"/>
</dbReference>
<dbReference type="InterPro" id="IPR021147">
    <property type="entry name" value="DUF697"/>
</dbReference>
<dbReference type="InterPro" id="IPR006507">
    <property type="entry name" value="UPF0283"/>
</dbReference>
<dbReference type="NCBIfam" id="TIGR01620">
    <property type="entry name" value="hyp_HI0043"/>
    <property type="match status" value="1"/>
</dbReference>
<dbReference type="PANTHER" id="PTHR39342">
    <property type="entry name" value="UPF0283 MEMBRANE PROTEIN YCJF"/>
    <property type="match status" value="1"/>
</dbReference>
<dbReference type="PANTHER" id="PTHR39342:SF1">
    <property type="entry name" value="UPF0283 MEMBRANE PROTEIN YCJF"/>
    <property type="match status" value="1"/>
</dbReference>
<dbReference type="Pfam" id="PF05128">
    <property type="entry name" value="DUF697"/>
    <property type="match status" value="1"/>
</dbReference>
<sequence length="357" mass="40858">MPKKVFQQEDVEQKITENFEPKQEFEQDELDIEMDCSQFETTMDRQNTDIPFQHMVRPKVTMWQKLLMATICLFSCGILAQSVQWLVDSWRDNQWIAFVFAMVSLFLVLLGLGTIIKEWRRLVQLKKRLILQEKSREIRSKSAVNLTEVSSEGKELCLKIASLMGIDDKSPQLIAWQEQVHEAYTEQEILRLFSQNVLIPFDRVAKKLISKNAVESALIVAVSPLAIVDMFFIAWRNIRLINQLAKLYGIELGYVSRLRLLRMVFVNMAFAGAAEVIQDLGLEWLSQDITAKLSARVAQGIGVGILTARLGIKAMEFCRPIAVAPEEKLRLSHIQTELLGTLKTTLFSANKVKEKVR</sequence>
<keyword id="KW-0997">Cell inner membrane</keyword>
<keyword id="KW-1003">Cell membrane</keyword>
<keyword id="KW-0472">Membrane</keyword>
<keyword id="KW-0812">Transmembrane</keyword>
<keyword id="KW-1133">Transmembrane helix</keyword>
<protein>
    <recommendedName>
        <fullName evidence="1">UPF0283 membrane protein HSM_0945</fullName>
    </recommendedName>
</protein>
<proteinExistence type="inferred from homology"/>
<organism>
    <name type="scientific">Histophilus somni (strain 2336)</name>
    <name type="common">Haemophilus somnus</name>
    <dbReference type="NCBI Taxonomy" id="228400"/>
    <lineage>
        <taxon>Bacteria</taxon>
        <taxon>Pseudomonadati</taxon>
        <taxon>Pseudomonadota</taxon>
        <taxon>Gammaproteobacteria</taxon>
        <taxon>Pasteurellales</taxon>
        <taxon>Pasteurellaceae</taxon>
        <taxon>Histophilus</taxon>
    </lineage>
</organism>
<name>Y945_HISS2</name>
<evidence type="ECO:0000255" key="1">
    <source>
        <dbReference type="HAMAP-Rule" id="MF_01085"/>
    </source>
</evidence>